<feature type="chain" id="PRO_0000388047" description="Structure-specific endonuclease subunit slx4">
    <location>
        <begin position="1"/>
        <end position="922"/>
    </location>
</feature>
<feature type="region of interest" description="Disordered" evidence="2">
    <location>
        <begin position="86"/>
        <end position="134"/>
    </location>
</feature>
<feature type="region of interest" description="Disordered" evidence="2">
    <location>
        <begin position="146"/>
        <end position="273"/>
    </location>
</feature>
<feature type="region of interest" description="Disordered" evidence="2">
    <location>
        <begin position="299"/>
        <end position="323"/>
    </location>
</feature>
<feature type="region of interest" description="Disordered" evidence="2">
    <location>
        <begin position="367"/>
        <end position="389"/>
    </location>
</feature>
<feature type="region of interest" description="Disordered" evidence="2">
    <location>
        <begin position="420"/>
        <end position="458"/>
    </location>
</feature>
<feature type="region of interest" description="Disordered" evidence="2">
    <location>
        <begin position="612"/>
        <end position="657"/>
    </location>
</feature>
<feature type="region of interest" description="Disordered" evidence="2">
    <location>
        <begin position="717"/>
        <end position="813"/>
    </location>
</feature>
<feature type="compositionally biased region" description="Basic residues" evidence="2">
    <location>
        <begin position="96"/>
        <end position="106"/>
    </location>
</feature>
<feature type="compositionally biased region" description="Basic and acidic residues" evidence="2">
    <location>
        <begin position="107"/>
        <end position="118"/>
    </location>
</feature>
<feature type="compositionally biased region" description="Basic and acidic residues" evidence="2">
    <location>
        <begin position="194"/>
        <end position="211"/>
    </location>
</feature>
<feature type="compositionally biased region" description="Basic and acidic residues" evidence="2">
    <location>
        <begin position="258"/>
        <end position="269"/>
    </location>
</feature>
<feature type="compositionally biased region" description="Acidic residues" evidence="2">
    <location>
        <begin position="310"/>
        <end position="319"/>
    </location>
</feature>
<feature type="compositionally biased region" description="Basic residues" evidence="2">
    <location>
        <begin position="437"/>
        <end position="450"/>
    </location>
</feature>
<feature type="compositionally biased region" description="Polar residues" evidence="2">
    <location>
        <begin position="612"/>
        <end position="623"/>
    </location>
</feature>
<proteinExistence type="inferred from homology"/>
<evidence type="ECO:0000255" key="1">
    <source>
        <dbReference type="HAMAP-Rule" id="MF_03110"/>
    </source>
</evidence>
<evidence type="ECO:0000256" key="2">
    <source>
        <dbReference type="SAM" id="MobiDB-lite"/>
    </source>
</evidence>
<gene>
    <name type="primary">slx4</name>
    <name type="ORF">SS1G_12078</name>
</gene>
<accession>A7F2D1</accession>
<keyword id="KW-0227">DNA damage</keyword>
<keyword id="KW-0233">DNA recombination</keyword>
<keyword id="KW-0234">DNA repair</keyword>
<keyword id="KW-0539">Nucleus</keyword>
<keyword id="KW-0597">Phosphoprotein</keyword>
<keyword id="KW-1185">Reference proteome</keyword>
<sequence>MATTDVFIISSSPPRRLVSHIASSPPLPSLDKMVNGKKASNLRQGSSVAPIPTGATIFASASTLLRESSSGSLQGFDNARSFVTSAVQDENDLKKSAKPKAPRKTAPKKEDGTVEKVAKASRKTVKKKDKDVSGDFVDELVGEAAEIIAEKKPRKPRAKKGDNAEGKSGSVAEATVEKKPRKSRAKKAVDATGEDLKEKVPRKSRAKKTDVEAGIETVPKEKAVRKPRAKNSDLDSNLQSKMVKGRVTKSAVNASNTHKVETSKADTGNKHFAPNPIVEDIVADEGFGLVEAIRRRTNWTPPKSTKVPIDLEDSPEAQESDTSKGFAELLGSFGYSSYQADSIEKRISSGVSNGAAATRKRKLIEMVTTNIPREPGSKTTKEKAVKKKARTLTDLATSAYATAEDDDNLLDAPTPLLQYFPHAAPEGSTNNGFKIPPKPRSKSPMKRVQKSKTGSAEEPILLSPESAMKQVSNQDFVFGTSSQLAREDSPSLLRDLHDAMQASNELDDYDDPFVSPPTKIAERGKAVVAAKRNLWSIAARDNHGDLMDVETIDLAHTPVAKPDRIMLSQKPSSLVTPGKDDWFDIDEIEDNRPPSTQVPLRETGPIERSINFQLLDSPTQPKNTSKDSSKVFPQKKGTKSLVDKSTTPKKVDASKMPDYESFTTPQLTREIQKYKFKQIKSRKRMIDLLIQCYESQNRPALGVLQGNIPIITQNSLEKSKDVADSSTQVKPTIPSPRRGRAKKVTTSTASLPKSKAKSKMTDTVAFLEMDSDTPLSKIRTPQKSRKGKQPLEDIFDSDHPITPSPPRRSDSQIRKISKALELSPDNNQDDEAQQAQLFTHIYTAITKAPPSQDPFNPSWHEKILLYDPIILEDLASWLNTGALSKVGWDEEVAPLEVKKWCESKSICCLWKENQGGGARSRY</sequence>
<dbReference type="EMBL" id="CH476639">
    <property type="protein sequence ID" value="EDN95873.1"/>
    <property type="molecule type" value="Genomic_DNA"/>
</dbReference>
<dbReference type="RefSeq" id="XP_001587049.1">
    <property type="nucleotide sequence ID" value="XM_001586999.1"/>
</dbReference>
<dbReference type="SMR" id="A7F2D1"/>
<dbReference type="STRING" id="665079.A7F2D1"/>
<dbReference type="EnsemblFungi" id="EDN95873">
    <property type="protein sequence ID" value="EDN95873"/>
    <property type="gene ID" value="SS1G_12078"/>
</dbReference>
<dbReference type="GeneID" id="5483213"/>
<dbReference type="KEGG" id="ssl:SS1G_12078"/>
<dbReference type="VEuPathDB" id="FungiDB:sscle_05g040650"/>
<dbReference type="eggNOG" id="ENOG502S832">
    <property type="taxonomic scope" value="Eukaryota"/>
</dbReference>
<dbReference type="HOGENOM" id="CLU_005957_1_0_1"/>
<dbReference type="InParanoid" id="A7F2D1"/>
<dbReference type="OMA" id="SICCLWK"/>
<dbReference type="OrthoDB" id="5349119at2759"/>
<dbReference type="Proteomes" id="UP000001312">
    <property type="component" value="Unassembled WGS sequence"/>
</dbReference>
<dbReference type="GO" id="GO:0033557">
    <property type="term" value="C:Slx1-Slx4 complex"/>
    <property type="evidence" value="ECO:0007669"/>
    <property type="project" value="UniProtKB-UniRule"/>
</dbReference>
<dbReference type="GO" id="GO:0017108">
    <property type="term" value="F:5'-flap endonuclease activity"/>
    <property type="evidence" value="ECO:0007669"/>
    <property type="project" value="InterPro"/>
</dbReference>
<dbReference type="GO" id="GO:0006310">
    <property type="term" value="P:DNA recombination"/>
    <property type="evidence" value="ECO:0007669"/>
    <property type="project" value="UniProtKB-UniRule"/>
</dbReference>
<dbReference type="GO" id="GO:0006281">
    <property type="term" value="P:DNA repair"/>
    <property type="evidence" value="ECO:0007669"/>
    <property type="project" value="UniProtKB-UniRule"/>
</dbReference>
<dbReference type="GO" id="GO:0006260">
    <property type="term" value="P:DNA replication"/>
    <property type="evidence" value="ECO:0007669"/>
    <property type="project" value="InterPro"/>
</dbReference>
<dbReference type="CDD" id="cd22999">
    <property type="entry name" value="SAP_SLX4"/>
    <property type="match status" value="1"/>
</dbReference>
<dbReference type="HAMAP" id="MF_03110">
    <property type="entry name" value="Endonuc_su_Slx4"/>
    <property type="match status" value="1"/>
</dbReference>
<dbReference type="InterPro" id="IPR027784">
    <property type="entry name" value="Slx4_ascomycetes"/>
</dbReference>
<dbReference type="InterPro" id="IPR018574">
    <property type="entry name" value="Structure-sp_endonuc_su_Slx4"/>
</dbReference>
<dbReference type="Pfam" id="PF09494">
    <property type="entry name" value="Slx4"/>
    <property type="match status" value="1"/>
</dbReference>
<comment type="function">
    <text evidence="1">Regulatory subunit of the slx1-slx4 structure-specific endonuclease that resolves DNA secondary structures generated during DNA repair and recombination. Has endonuclease activity towards branched DNA substrates, introducing single-strand cuts in duplex DNA close to junctions with ss-DNA.</text>
</comment>
<comment type="subunit">
    <text evidence="1">Forms a heterodimer with slx1.</text>
</comment>
<comment type="subcellular location">
    <subcellularLocation>
        <location evidence="1">Nucleus</location>
    </subcellularLocation>
</comment>
<comment type="PTM">
    <text evidence="1">Phosphorylated in response to DNA damage.</text>
</comment>
<comment type="similarity">
    <text evidence="1">Belongs to the SLX4 family.</text>
</comment>
<organism>
    <name type="scientific">Sclerotinia sclerotiorum (strain ATCC 18683 / 1980 / Ss-1)</name>
    <name type="common">White mold</name>
    <name type="synonym">Whetzelinia sclerotiorum</name>
    <dbReference type="NCBI Taxonomy" id="665079"/>
    <lineage>
        <taxon>Eukaryota</taxon>
        <taxon>Fungi</taxon>
        <taxon>Dikarya</taxon>
        <taxon>Ascomycota</taxon>
        <taxon>Pezizomycotina</taxon>
        <taxon>Leotiomycetes</taxon>
        <taxon>Helotiales</taxon>
        <taxon>Sclerotiniaceae</taxon>
        <taxon>Sclerotinia</taxon>
    </lineage>
</organism>
<protein>
    <recommendedName>
        <fullName evidence="1">Structure-specific endonuclease subunit slx4</fullName>
    </recommendedName>
</protein>
<reference key="1">
    <citation type="journal article" date="2011" name="PLoS Genet.">
        <title>Genomic analysis of the necrotrophic fungal pathogens Sclerotinia sclerotiorum and Botrytis cinerea.</title>
        <authorList>
            <person name="Amselem J."/>
            <person name="Cuomo C.A."/>
            <person name="van Kan J.A.L."/>
            <person name="Viaud M."/>
            <person name="Benito E.P."/>
            <person name="Couloux A."/>
            <person name="Coutinho P.M."/>
            <person name="de Vries R.P."/>
            <person name="Dyer P.S."/>
            <person name="Fillinger S."/>
            <person name="Fournier E."/>
            <person name="Gout L."/>
            <person name="Hahn M."/>
            <person name="Kohn L."/>
            <person name="Lapalu N."/>
            <person name="Plummer K.M."/>
            <person name="Pradier J.-M."/>
            <person name="Quevillon E."/>
            <person name="Sharon A."/>
            <person name="Simon A."/>
            <person name="ten Have A."/>
            <person name="Tudzynski B."/>
            <person name="Tudzynski P."/>
            <person name="Wincker P."/>
            <person name="Andrew M."/>
            <person name="Anthouard V."/>
            <person name="Beever R.E."/>
            <person name="Beffa R."/>
            <person name="Benoit I."/>
            <person name="Bouzid O."/>
            <person name="Brault B."/>
            <person name="Chen Z."/>
            <person name="Choquer M."/>
            <person name="Collemare J."/>
            <person name="Cotton P."/>
            <person name="Danchin E.G."/>
            <person name="Da Silva C."/>
            <person name="Gautier A."/>
            <person name="Giraud C."/>
            <person name="Giraud T."/>
            <person name="Gonzalez C."/>
            <person name="Grossetete S."/>
            <person name="Gueldener U."/>
            <person name="Henrissat B."/>
            <person name="Howlett B.J."/>
            <person name="Kodira C."/>
            <person name="Kretschmer M."/>
            <person name="Lappartient A."/>
            <person name="Leroch M."/>
            <person name="Levis C."/>
            <person name="Mauceli E."/>
            <person name="Neuveglise C."/>
            <person name="Oeser B."/>
            <person name="Pearson M."/>
            <person name="Poulain J."/>
            <person name="Poussereau N."/>
            <person name="Quesneville H."/>
            <person name="Rascle C."/>
            <person name="Schumacher J."/>
            <person name="Segurens B."/>
            <person name="Sexton A."/>
            <person name="Silva E."/>
            <person name="Sirven C."/>
            <person name="Soanes D.M."/>
            <person name="Talbot N.J."/>
            <person name="Templeton M."/>
            <person name="Yandava C."/>
            <person name="Yarden O."/>
            <person name="Zeng Q."/>
            <person name="Rollins J.A."/>
            <person name="Lebrun M.-H."/>
            <person name="Dickman M."/>
        </authorList>
    </citation>
    <scope>NUCLEOTIDE SEQUENCE [LARGE SCALE GENOMIC DNA]</scope>
    <source>
        <strain>ATCC 18683 / 1980 / Ss-1</strain>
    </source>
</reference>
<name>SLX4_SCLS1</name>